<comment type="function">
    <text evidence="1">DNA-dependent RNA polymerase catalyzes the transcription of DNA into RNA using the four ribonucleoside triphosphates as substrates.</text>
</comment>
<comment type="catalytic activity">
    <reaction evidence="1">
        <text>RNA(n) + a ribonucleoside 5'-triphosphate = RNA(n+1) + diphosphate</text>
        <dbReference type="Rhea" id="RHEA:21248"/>
        <dbReference type="Rhea" id="RHEA-COMP:14527"/>
        <dbReference type="Rhea" id="RHEA-COMP:17342"/>
        <dbReference type="ChEBI" id="CHEBI:33019"/>
        <dbReference type="ChEBI" id="CHEBI:61557"/>
        <dbReference type="ChEBI" id="CHEBI:140395"/>
        <dbReference type="EC" id="2.7.7.6"/>
    </reaction>
</comment>
<comment type="subunit">
    <text evidence="1">In plastids the minimal PEP RNA polymerase catalytic core is composed of four subunits: alpha, beta, beta', and beta''. When a (nuclear-encoded) sigma factor is associated with the core the holoenzyme is formed, which can initiate transcription.</text>
</comment>
<comment type="subcellular location">
    <subcellularLocation>
        <location>Plastid</location>
        <location>Chloroplast</location>
    </subcellularLocation>
</comment>
<comment type="domain">
    <text evidence="1">The N-terminal domain is essential for RNAP assembly and basal transcription, whereas the C-terminal domain is involved in interaction with transcriptional regulators and with upstream promoter elements.</text>
</comment>
<comment type="similarity">
    <text evidence="1">Belongs to the RNA polymerase alpha chain family.</text>
</comment>
<protein>
    <recommendedName>
        <fullName evidence="1">DNA-directed RNA polymerase subunit alpha</fullName>
        <shortName evidence="1">PEP</shortName>
        <ecNumber evidence="1">2.7.7.6</ecNumber>
    </recommendedName>
    <alternativeName>
        <fullName evidence="1">Plastid-encoded RNA polymerase subunit alpha</fullName>
        <shortName evidence="1">RNA polymerase subunit alpha</shortName>
    </alternativeName>
</protein>
<reference key="1">
    <citation type="submission" date="2007-03" db="EMBL/GenBank/DDBJ databases">
        <title>Sequencing analysis of Nasturtium officinale chloroplast DNA.</title>
        <authorList>
            <person name="Hosouchi T."/>
            <person name="Tsuruoka H."/>
            <person name="Kotani H."/>
        </authorList>
    </citation>
    <scope>NUCLEOTIDE SEQUENCE [LARGE SCALE GENOMIC DNA]</scope>
</reference>
<name>RPOA_NASOF</name>
<feature type="chain" id="PRO_0000296898" description="DNA-directed RNA polymerase subunit alpha">
    <location>
        <begin position="1"/>
        <end position="327"/>
    </location>
</feature>
<feature type="region of interest" description="Alpha N-terminal domain (alpha-NTD)" evidence="1">
    <location>
        <begin position="1"/>
        <end position="233"/>
    </location>
</feature>
<feature type="region of interest" description="Alpha C-terminal domain (alpha-CTD)" evidence="1">
    <location>
        <begin position="267"/>
        <end position="327"/>
    </location>
</feature>
<evidence type="ECO:0000255" key="1">
    <source>
        <dbReference type="HAMAP-Rule" id="MF_00059"/>
    </source>
</evidence>
<geneLocation type="chloroplast"/>
<gene>
    <name evidence="1" type="primary">rpoA</name>
</gene>
<accession>A4QLW5</accession>
<proteinExistence type="inferred from homology"/>
<keyword id="KW-0150">Chloroplast</keyword>
<keyword id="KW-0240">DNA-directed RNA polymerase</keyword>
<keyword id="KW-0548">Nucleotidyltransferase</keyword>
<keyword id="KW-0934">Plastid</keyword>
<keyword id="KW-0804">Transcription</keyword>
<keyword id="KW-0808">Transferase</keyword>
<organism>
    <name type="scientific">Nasturtium officinale</name>
    <name type="common">Watercress</name>
    <name type="synonym">Rorippa nasturtium-aquaticum</name>
    <dbReference type="NCBI Taxonomy" id="65948"/>
    <lineage>
        <taxon>Eukaryota</taxon>
        <taxon>Viridiplantae</taxon>
        <taxon>Streptophyta</taxon>
        <taxon>Embryophyta</taxon>
        <taxon>Tracheophyta</taxon>
        <taxon>Spermatophyta</taxon>
        <taxon>Magnoliopsida</taxon>
        <taxon>eudicotyledons</taxon>
        <taxon>Gunneridae</taxon>
        <taxon>Pentapetalae</taxon>
        <taxon>rosids</taxon>
        <taxon>malvids</taxon>
        <taxon>Brassicales</taxon>
        <taxon>Brassicaceae</taxon>
        <taxon>Cardamineae</taxon>
        <taxon>Nasturtium</taxon>
    </lineage>
</organism>
<dbReference type="EC" id="2.7.7.6" evidence="1"/>
<dbReference type="EMBL" id="AP009376">
    <property type="protein sequence ID" value="BAF50670.1"/>
    <property type="molecule type" value="Genomic_DNA"/>
</dbReference>
<dbReference type="RefSeq" id="YP_001123846.1">
    <property type="nucleotide sequence ID" value="NC_009275.1"/>
</dbReference>
<dbReference type="SMR" id="A4QLW5"/>
<dbReference type="GeneID" id="4962182"/>
<dbReference type="GO" id="GO:0009507">
    <property type="term" value="C:chloroplast"/>
    <property type="evidence" value="ECO:0007669"/>
    <property type="project" value="UniProtKB-SubCell"/>
</dbReference>
<dbReference type="GO" id="GO:0000428">
    <property type="term" value="C:DNA-directed RNA polymerase complex"/>
    <property type="evidence" value="ECO:0007669"/>
    <property type="project" value="UniProtKB-KW"/>
</dbReference>
<dbReference type="GO" id="GO:0005739">
    <property type="term" value="C:mitochondrion"/>
    <property type="evidence" value="ECO:0007669"/>
    <property type="project" value="GOC"/>
</dbReference>
<dbReference type="GO" id="GO:0003677">
    <property type="term" value="F:DNA binding"/>
    <property type="evidence" value="ECO:0007669"/>
    <property type="project" value="UniProtKB-UniRule"/>
</dbReference>
<dbReference type="GO" id="GO:0003899">
    <property type="term" value="F:DNA-directed RNA polymerase activity"/>
    <property type="evidence" value="ECO:0007669"/>
    <property type="project" value="UniProtKB-UniRule"/>
</dbReference>
<dbReference type="GO" id="GO:0046983">
    <property type="term" value="F:protein dimerization activity"/>
    <property type="evidence" value="ECO:0007669"/>
    <property type="project" value="InterPro"/>
</dbReference>
<dbReference type="GO" id="GO:0006351">
    <property type="term" value="P:DNA-templated transcription"/>
    <property type="evidence" value="ECO:0007669"/>
    <property type="project" value="UniProtKB-UniRule"/>
</dbReference>
<dbReference type="CDD" id="cd06928">
    <property type="entry name" value="RNAP_alpha_NTD"/>
    <property type="match status" value="1"/>
</dbReference>
<dbReference type="FunFam" id="2.170.120.12:FF:000001">
    <property type="entry name" value="DNA-directed RNA polymerase subunit alpha"/>
    <property type="match status" value="1"/>
</dbReference>
<dbReference type="FunFam" id="3.30.1360.10:FF:000039">
    <property type="entry name" value="DNA-directed RNA polymerase subunit alpha"/>
    <property type="match status" value="1"/>
</dbReference>
<dbReference type="Gene3D" id="1.10.150.20">
    <property type="entry name" value="5' to 3' exonuclease, C-terminal subdomain"/>
    <property type="match status" value="1"/>
</dbReference>
<dbReference type="Gene3D" id="2.170.120.12">
    <property type="entry name" value="DNA-directed RNA polymerase, insert domain"/>
    <property type="match status" value="1"/>
</dbReference>
<dbReference type="Gene3D" id="3.30.1360.10">
    <property type="entry name" value="RNA polymerase, RBP11-like subunit"/>
    <property type="match status" value="1"/>
</dbReference>
<dbReference type="HAMAP" id="MF_00059">
    <property type="entry name" value="RNApol_bact_RpoA"/>
    <property type="match status" value="1"/>
</dbReference>
<dbReference type="InterPro" id="IPR011262">
    <property type="entry name" value="DNA-dir_RNA_pol_insert"/>
</dbReference>
<dbReference type="InterPro" id="IPR011263">
    <property type="entry name" value="DNA-dir_RNA_pol_RpoA/D/Rpb3"/>
</dbReference>
<dbReference type="InterPro" id="IPR011773">
    <property type="entry name" value="DNA-dir_RpoA"/>
</dbReference>
<dbReference type="InterPro" id="IPR036603">
    <property type="entry name" value="RBP11-like"/>
</dbReference>
<dbReference type="InterPro" id="IPR011260">
    <property type="entry name" value="RNAP_asu_C"/>
</dbReference>
<dbReference type="InterPro" id="IPR036643">
    <property type="entry name" value="RNApol_insert_sf"/>
</dbReference>
<dbReference type="NCBIfam" id="TIGR02027">
    <property type="entry name" value="rpoA"/>
    <property type="match status" value="1"/>
</dbReference>
<dbReference type="Pfam" id="PF01000">
    <property type="entry name" value="RNA_pol_A_bac"/>
    <property type="match status" value="1"/>
</dbReference>
<dbReference type="Pfam" id="PF03118">
    <property type="entry name" value="RNA_pol_A_CTD"/>
    <property type="match status" value="1"/>
</dbReference>
<dbReference type="Pfam" id="PF01193">
    <property type="entry name" value="RNA_pol_L"/>
    <property type="match status" value="1"/>
</dbReference>
<dbReference type="SMART" id="SM00662">
    <property type="entry name" value="RPOLD"/>
    <property type="match status" value="1"/>
</dbReference>
<dbReference type="SUPFAM" id="SSF47789">
    <property type="entry name" value="C-terminal domain of RNA polymerase alpha subunit"/>
    <property type="match status" value="1"/>
</dbReference>
<dbReference type="SUPFAM" id="SSF56553">
    <property type="entry name" value="Insert subdomain of RNA polymerase alpha subunit"/>
    <property type="match status" value="1"/>
</dbReference>
<dbReference type="SUPFAM" id="SSF55257">
    <property type="entry name" value="RBP11-like subunits of RNA polymerase"/>
    <property type="match status" value="1"/>
</dbReference>
<sequence length="327" mass="37888">MVREKVKVSTRTLQWKCVESRRDSKRLYYGRFILSPLMKGQADTIGIAMRRALLGEIEGTCITRAKSENIPHDYSNIVGIQESVHEILMNLNEIVLRSNLYGTRNALICVQGPGYITARDIILPPSVEIIDNTQHIATLTEPIDLCIGLKIERNRGYSLKMSNNFEDRSYPIDAVFMPVQNANHSIHSYGNGNEKQEILFLEIWTNGSLTPKEALHEASRNLINLFIPFLHVEEETFYLENNQHQVTLPLFPFHNRLVNLRKKKKELAFQYIFIDQLELPPRIYNCLKKSNIHTLLDLLNNSQEDLIKIEHFHIEDVKKILDILEKK</sequence>